<organism>
    <name type="scientific">Homo sapiens</name>
    <name type="common">Human</name>
    <dbReference type="NCBI Taxonomy" id="9606"/>
    <lineage>
        <taxon>Eukaryota</taxon>
        <taxon>Metazoa</taxon>
        <taxon>Chordata</taxon>
        <taxon>Craniata</taxon>
        <taxon>Vertebrata</taxon>
        <taxon>Euteleostomi</taxon>
        <taxon>Mammalia</taxon>
        <taxon>Eutheria</taxon>
        <taxon>Euarchontoglires</taxon>
        <taxon>Primates</taxon>
        <taxon>Haplorrhini</taxon>
        <taxon>Catarrhini</taxon>
        <taxon>Hominidae</taxon>
        <taxon>Homo</taxon>
    </lineage>
</organism>
<feature type="signal peptide" evidence="1">
    <location>
        <begin position="1"/>
        <end position="35"/>
    </location>
</feature>
<feature type="chain" id="PRO_0000342455" description="Putative uncharacterized protein FLJ46089">
    <location>
        <begin position="36"/>
        <end position="148"/>
    </location>
</feature>
<feature type="sequence conflict" description="In Ref. 1; BAC87214." evidence="2" ref="1">
    <original>N</original>
    <variation>D</variation>
    <location>
        <position position="73"/>
    </location>
</feature>
<accession>Q6ZRU5</accession>
<accession>A6NG26</accession>
<keyword id="KW-1185">Reference proteome</keyword>
<keyword id="KW-0964">Secreted</keyword>
<keyword id="KW-0732">Signal</keyword>
<sequence>MRCVTRTRNWWRRAARMPRAGSSAWWVAVCKQVCTRVGTYAVCWCSWNTGRFTGCPSWKDFWKPVGPALHVFNVKCEAQRGLKLTQPFTVACKIDPVLCKSGLGFPPQLFTGCVYLSTYTYPWQAQAECVRCPRDSNRCKRITPSACL</sequence>
<comment type="subcellular location">
    <subcellularLocation>
        <location evidence="2">Secreted</location>
    </subcellularLocation>
</comment>
<comment type="caution">
    <text evidence="2">Could be the product of a pseudogene.</text>
</comment>
<evidence type="ECO:0000255" key="1"/>
<evidence type="ECO:0000305" key="2"/>
<protein>
    <recommendedName>
        <fullName>Putative uncharacterized protein FLJ46089</fullName>
    </recommendedName>
</protein>
<proteinExistence type="uncertain"/>
<name>YQ032_HUMAN</name>
<dbReference type="EMBL" id="AK127974">
    <property type="protein sequence ID" value="BAC87214.1"/>
    <property type="molecule type" value="mRNA"/>
</dbReference>
<dbReference type="EMBL" id="AC015818">
    <property type="status" value="NOT_ANNOTATED_CDS"/>
    <property type="molecule type" value="Genomic_DNA"/>
</dbReference>
<dbReference type="BioMuta" id="-"/>
<dbReference type="DMDM" id="193806677"/>
<dbReference type="jPOST" id="Q6ZRU5"/>
<dbReference type="AGR" id="HGNC:50723"/>
<dbReference type="neXtProt" id="NX_Q6ZRU5"/>
<dbReference type="InParanoid" id="Q6ZRU5"/>
<dbReference type="PAN-GO" id="Q6ZRU5">
    <property type="GO annotations" value="0 GO annotations based on evolutionary models"/>
</dbReference>
<dbReference type="Pharos" id="Q6ZRU5">
    <property type="development level" value="Tdark"/>
</dbReference>
<dbReference type="Proteomes" id="UP000005640">
    <property type="component" value="Unplaced"/>
</dbReference>
<dbReference type="RNAct" id="Q6ZRU5">
    <property type="molecule type" value="protein"/>
</dbReference>
<dbReference type="GO" id="GO:0005576">
    <property type="term" value="C:extracellular region"/>
    <property type="evidence" value="ECO:0007669"/>
    <property type="project" value="UniProtKB-SubCell"/>
</dbReference>
<reference key="1">
    <citation type="journal article" date="2004" name="Nat. Genet.">
        <title>Complete sequencing and characterization of 21,243 full-length human cDNAs.</title>
        <authorList>
            <person name="Ota T."/>
            <person name="Suzuki Y."/>
            <person name="Nishikawa T."/>
            <person name="Otsuki T."/>
            <person name="Sugiyama T."/>
            <person name="Irie R."/>
            <person name="Wakamatsu A."/>
            <person name="Hayashi K."/>
            <person name="Sato H."/>
            <person name="Nagai K."/>
            <person name="Kimura K."/>
            <person name="Makita H."/>
            <person name="Sekine M."/>
            <person name="Obayashi M."/>
            <person name="Nishi T."/>
            <person name="Shibahara T."/>
            <person name="Tanaka T."/>
            <person name="Ishii S."/>
            <person name="Yamamoto J."/>
            <person name="Saito K."/>
            <person name="Kawai Y."/>
            <person name="Isono Y."/>
            <person name="Nakamura Y."/>
            <person name="Nagahari K."/>
            <person name="Murakami K."/>
            <person name="Yasuda T."/>
            <person name="Iwayanagi T."/>
            <person name="Wagatsuma M."/>
            <person name="Shiratori A."/>
            <person name="Sudo H."/>
            <person name="Hosoiri T."/>
            <person name="Kaku Y."/>
            <person name="Kodaira H."/>
            <person name="Kondo H."/>
            <person name="Sugawara M."/>
            <person name="Takahashi M."/>
            <person name="Kanda K."/>
            <person name="Yokoi T."/>
            <person name="Furuya T."/>
            <person name="Kikkawa E."/>
            <person name="Omura Y."/>
            <person name="Abe K."/>
            <person name="Kamihara K."/>
            <person name="Katsuta N."/>
            <person name="Sato K."/>
            <person name="Tanikawa M."/>
            <person name="Yamazaki M."/>
            <person name="Ninomiya K."/>
            <person name="Ishibashi T."/>
            <person name="Yamashita H."/>
            <person name="Murakawa K."/>
            <person name="Fujimori K."/>
            <person name="Tanai H."/>
            <person name="Kimata M."/>
            <person name="Watanabe M."/>
            <person name="Hiraoka S."/>
            <person name="Chiba Y."/>
            <person name="Ishida S."/>
            <person name="Ono Y."/>
            <person name="Takiguchi S."/>
            <person name="Watanabe S."/>
            <person name="Yosida M."/>
            <person name="Hotuta T."/>
            <person name="Kusano J."/>
            <person name="Kanehori K."/>
            <person name="Takahashi-Fujii A."/>
            <person name="Hara H."/>
            <person name="Tanase T.-O."/>
            <person name="Nomura Y."/>
            <person name="Togiya S."/>
            <person name="Komai F."/>
            <person name="Hara R."/>
            <person name="Takeuchi K."/>
            <person name="Arita M."/>
            <person name="Imose N."/>
            <person name="Musashino K."/>
            <person name="Yuuki H."/>
            <person name="Oshima A."/>
            <person name="Sasaki N."/>
            <person name="Aotsuka S."/>
            <person name="Yoshikawa Y."/>
            <person name="Matsunawa H."/>
            <person name="Ichihara T."/>
            <person name="Shiohata N."/>
            <person name="Sano S."/>
            <person name="Moriya S."/>
            <person name="Momiyama H."/>
            <person name="Satoh N."/>
            <person name="Takami S."/>
            <person name="Terashima Y."/>
            <person name="Suzuki O."/>
            <person name="Nakagawa S."/>
            <person name="Senoh A."/>
            <person name="Mizoguchi H."/>
            <person name="Goto Y."/>
            <person name="Shimizu F."/>
            <person name="Wakebe H."/>
            <person name="Hishigaki H."/>
            <person name="Watanabe T."/>
            <person name="Sugiyama A."/>
            <person name="Takemoto M."/>
            <person name="Kawakami B."/>
            <person name="Yamazaki M."/>
            <person name="Watanabe K."/>
            <person name="Kumagai A."/>
            <person name="Itakura S."/>
            <person name="Fukuzumi Y."/>
            <person name="Fujimori Y."/>
            <person name="Komiyama M."/>
            <person name="Tashiro H."/>
            <person name="Tanigami A."/>
            <person name="Fujiwara T."/>
            <person name="Ono T."/>
            <person name="Yamada K."/>
            <person name="Fujii Y."/>
            <person name="Ozaki K."/>
            <person name="Hirao M."/>
            <person name="Ohmori Y."/>
            <person name="Kawabata A."/>
            <person name="Hikiji T."/>
            <person name="Kobatake N."/>
            <person name="Inagaki H."/>
            <person name="Ikema Y."/>
            <person name="Okamoto S."/>
            <person name="Okitani R."/>
            <person name="Kawakami T."/>
            <person name="Noguchi S."/>
            <person name="Itoh T."/>
            <person name="Shigeta K."/>
            <person name="Senba T."/>
            <person name="Matsumura K."/>
            <person name="Nakajima Y."/>
            <person name="Mizuno T."/>
            <person name="Morinaga M."/>
            <person name="Sasaki M."/>
            <person name="Togashi T."/>
            <person name="Oyama M."/>
            <person name="Hata H."/>
            <person name="Watanabe M."/>
            <person name="Komatsu T."/>
            <person name="Mizushima-Sugano J."/>
            <person name="Satoh T."/>
            <person name="Shirai Y."/>
            <person name="Takahashi Y."/>
            <person name="Nakagawa K."/>
            <person name="Okumura K."/>
            <person name="Nagase T."/>
            <person name="Nomura N."/>
            <person name="Kikuchi H."/>
            <person name="Masuho Y."/>
            <person name="Yamashita R."/>
            <person name="Nakai K."/>
            <person name="Yada T."/>
            <person name="Nakamura Y."/>
            <person name="Ohara O."/>
            <person name="Isogai T."/>
            <person name="Sugano S."/>
        </authorList>
    </citation>
    <scope>NUCLEOTIDE SEQUENCE [LARGE SCALE MRNA]</scope>
    <source>
        <tissue>Testis</tissue>
    </source>
</reference>
<reference key="2">
    <citation type="journal article" date="2006" name="Nature">
        <title>DNA sequence of human chromosome 17 and analysis of rearrangement in the human lineage.</title>
        <authorList>
            <person name="Zody M.C."/>
            <person name="Garber M."/>
            <person name="Adams D.J."/>
            <person name="Sharpe T."/>
            <person name="Harrow J."/>
            <person name="Lupski J.R."/>
            <person name="Nicholson C."/>
            <person name="Searle S.M."/>
            <person name="Wilming L."/>
            <person name="Young S.K."/>
            <person name="Abouelleil A."/>
            <person name="Allen N.R."/>
            <person name="Bi W."/>
            <person name="Bloom T."/>
            <person name="Borowsky M.L."/>
            <person name="Bugalter B.E."/>
            <person name="Butler J."/>
            <person name="Chang J.L."/>
            <person name="Chen C.-K."/>
            <person name="Cook A."/>
            <person name="Corum B."/>
            <person name="Cuomo C.A."/>
            <person name="de Jong P.J."/>
            <person name="DeCaprio D."/>
            <person name="Dewar K."/>
            <person name="FitzGerald M."/>
            <person name="Gilbert J."/>
            <person name="Gibson R."/>
            <person name="Gnerre S."/>
            <person name="Goldstein S."/>
            <person name="Grafham D.V."/>
            <person name="Grocock R."/>
            <person name="Hafez N."/>
            <person name="Hagopian D.S."/>
            <person name="Hart E."/>
            <person name="Norman C.H."/>
            <person name="Humphray S."/>
            <person name="Jaffe D.B."/>
            <person name="Jones M."/>
            <person name="Kamal M."/>
            <person name="Khodiyar V.K."/>
            <person name="LaButti K."/>
            <person name="Laird G."/>
            <person name="Lehoczky J."/>
            <person name="Liu X."/>
            <person name="Lokyitsang T."/>
            <person name="Loveland J."/>
            <person name="Lui A."/>
            <person name="Macdonald P."/>
            <person name="Major J.E."/>
            <person name="Matthews L."/>
            <person name="Mauceli E."/>
            <person name="McCarroll S.A."/>
            <person name="Mihalev A.H."/>
            <person name="Mudge J."/>
            <person name="Nguyen C."/>
            <person name="Nicol R."/>
            <person name="O'Leary S.B."/>
            <person name="Osoegawa K."/>
            <person name="Schwartz D.C."/>
            <person name="Shaw-Smith C."/>
            <person name="Stankiewicz P."/>
            <person name="Steward C."/>
            <person name="Swarbreck D."/>
            <person name="Venkataraman V."/>
            <person name="Whittaker C.A."/>
            <person name="Yang X."/>
            <person name="Zimmer A.R."/>
            <person name="Bradley A."/>
            <person name="Hubbard T."/>
            <person name="Birren B.W."/>
            <person name="Rogers J."/>
            <person name="Lander E.S."/>
            <person name="Nusbaum C."/>
        </authorList>
    </citation>
    <scope>NUCLEOTIDE SEQUENCE [LARGE SCALE GENOMIC DNA]</scope>
</reference>